<dbReference type="EMBL" id="CP000260">
    <property type="protein sequence ID" value="ABF33815.1"/>
    <property type="molecule type" value="Genomic_DNA"/>
</dbReference>
<dbReference type="SMR" id="Q1JHC1"/>
<dbReference type="KEGG" id="sph:MGAS10270_Spy0750"/>
<dbReference type="HOGENOM" id="CLU_033732_3_0_9"/>
<dbReference type="Proteomes" id="UP000002436">
    <property type="component" value="Chromosome"/>
</dbReference>
<dbReference type="GO" id="GO:0005829">
    <property type="term" value="C:cytosol"/>
    <property type="evidence" value="ECO:0007669"/>
    <property type="project" value="TreeGrafter"/>
</dbReference>
<dbReference type="GO" id="GO:0005525">
    <property type="term" value="F:GTP binding"/>
    <property type="evidence" value="ECO:0007669"/>
    <property type="project" value="UniProtKB-UniRule"/>
</dbReference>
<dbReference type="GO" id="GO:0046872">
    <property type="term" value="F:metal ion binding"/>
    <property type="evidence" value="ECO:0007669"/>
    <property type="project" value="UniProtKB-KW"/>
</dbReference>
<dbReference type="GO" id="GO:0000917">
    <property type="term" value="P:division septum assembly"/>
    <property type="evidence" value="ECO:0007669"/>
    <property type="project" value="UniProtKB-KW"/>
</dbReference>
<dbReference type="CDD" id="cd01876">
    <property type="entry name" value="YihA_EngB"/>
    <property type="match status" value="1"/>
</dbReference>
<dbReference type="FunFam" id="3.40.50.300:FF:000098">
    <property type="entry name" value="Probable GTP-binding protein EngB"/>
    <property type="match status" value="1"/>
</dbReference>
<dbReference type="Gene3D" id="3.40.50.300">
    <property type="entry name" value="P-loop containing nucleotide triphosphate hydrolases"/>
    <property type="match status" value="1"/>
</dbReference>
<dbReference type="HAMAP" id="MF_00321">
    <property type="entry name" value="GTPase_EngB"/>
    <property type="match status" value="1"/>
</dbReference>
<dbReference type="InterPro" id="IPR030393">
    <property type="entry name" value="G_ENGB_dom"/>
</dbReference>
<dbReference type="InterPro" id="IPR006073">
    <property type="entry name" value="GTP-bd"/>
</dbReference>
<dbReference type="InterPro" id="IPR019987">
    <property type="entry name" value="GTP-bd_ribosome_bio_YsxC"/>
</dbReference>
<dbReference type="InterPro" id="IPR027417">
    <property type="entry name" value="P-loop_NTPase"/>
</dbReference>
<dbReference type="InterPro" id="IPR005225">
    <property type="entry name" value="Small_GTP-bd"/>
</dbReference>
<dbReference type="NCBIfam" id="TIGR03598">
    <property type="entry name" value="GTPase_YsxC"/>
    <property type="match status" value="1"/>
</dbReference>
<dbReference type="NCBIfam" id="TIGR00231">
    <property type="entry name" value="small_GTP"/>
    <property type="match status" value="1"/>
</dbReference>
<dbReference type="PANTHER" id="PTHR11649:SF13">
    <property type="entry name" value="ENGB-TYPE G DOMAIN-CONTAINING PROTEIN"/>
    <property type="match status" value="1"/>
</dbReference>
<dbReference type="PANTHER" id="PTHR11649">
    <property type="entry name" value="MSS1/TRME-RELATED GTP-BINDING PROTEIN"/>
    <property type="match status" value="1"/>
</dbReference>
<dbReference type="Pfam" id="PF01926">
    <property type="entry name" value="MMR_HSR1"/>
    <property type="match status" value="1"/>
</dbReference>
<dbReference type="SUPFAM" id="SSF52540">
    <property type="entry name" value="P-loop containing nucleoside triphosphate hydrolases"/>
    <property type="match status" value="1"/>
</dbReference>
<dbReference type="PROSITE" id="PS51706">
    <property type="entry name" value="G_ENGB"/>
    <property type="match status" value="1"/>
</dbReference>
<protein>
    <recommendedName>
        <fullName evidence="1">Probable GTP-binding protein EngB</fullName>
    </recommendedName>
</protein>
<gene>
    <name evidence="1" type="primary">engB</name>
    <name type="ordered locus">MGAS10270_Spy0750</name>
</gene>
<organism>
    <name type="scientific">Streptococcus pyogenes serotype M2 (strain MGAS10270)</name>
    <dbReference type="NCBI Taxonomy" id="370552"/>
    <lineage>
        <taxon>Bacteria</taxon>
        <taxon>Bacillati</taxon>
        <taxon>Bacillota</taxon>
        <taxon>Bacilli</taxon>
        <taxon>Lactobacillales</taxon>
        <taxon>Streptococcaceae</taxon>
        <taxon>Streptococcus</taxon>
    </lineage>
</organism>
<feature type="chain" id="PRO_0000266966" description="Probable GTP-binding protein EngB">
    <location>
        <begin position="1"/>
        <end position="199"/>
    </location>
</feature>
<feature type="domain" description="EngB-type G" evidence="1">
    <location>
        <begin position="28"/>
        <end position="199"/>
    </location>
</feature>
<feature type="binding site" evidence="1">
    <location>
        <begin position="36"/>
        <end position="43"/>
    </location>
    <ligand>
        <name>GTP</name>
        <dbReference type="ChEBI" id="CHEBI:37565"/>
    </ligand>
</feature>
<feature type="binding site" evidence="1">
    <location>
        <position position="43"/>
    </location>
    <ligand>
        <name>Mg(2+)</name>
        <dbReference type="ChEBI" id="CHEBI:18420"/>
    </ligand>
</feature>
<feature type="binding site" evidence="1">
    <location>
        <begin position="63"/>
        <end position="67"/>
    </location>
    <ligand>
        <name>GTP</name>
        <dbReference type="ChEBI" id="CHEBI:37565"/>
    </ligand>
</feature>
<feature type="binding site" evidence="1">
    <location>
        <position position="65"/>
    </location>
    <ligand>
        <name>Mg(2+)</name>
        <dbReference type="ChEBI" id="CHEBI:18420"/>
    </ligand>
</feature>
<feature type="binding site" evidence="1">
    <location>
        <begin position="81"/>
        <end position="84"/>
    </location>
    <ligand>
        <name>GTP</name>
        <dbReference type="ChEBI" id="CHEBI:37565"/>
    </ligand>
</feature>
<feature type="binding site" evidence="1">
    <location>
        <begin position="148"/>
        <end position="151"/>
    </location>
    <ligand>
        <name>GTP</name>
        <dbReference type="ChEBI" id="CHEBI:37565"/>
    </ligand>
</feature>
<feature type="binding site" evidence="1">
    <location>
        <begin position="180"/>
        <end position="182"/>
    </location>
    <ligand>
        <name>GTP</name>
        <dbReference type="ChEBI" id="CHEBI:37565"/>
    </ligand>
</feature>
<evidence type="ECO:0000255" key="1">
    <source>
        <dbReference type="HAMAP-Rule" id="MF_00321"/>
    </source>
</evidence>
<proteinExistence type="inferred from homology"/>
<reference key="1">
    <citation type="journal article" date="2006" name="Proc. Natl. Acad. Sci. U.S.A.">
        <title>Molecular genetic anatomy of inter- and intraserotype variation in the human bacterial pathogen group A Streptococcus.</title>
        <authorList>
            <person name="Beres S.B."/>
            <person name="Richter E.W."/>
            <person name="Nagiec M.J."/>
            <person name="Sumby P."/>
            <person name="Porcella S.F."/>
            <person name="DeLeo F.R."/>
            <person name="Musser J.M."/>
        </authorList>
    </citation>
    <scope>NUCLEOTIDE SEQUENCE [LARGE SCALE GENOMIC DNA]</scope>
    <source>
        <strain>MGAS10270</strain>
    </source>
</reference>
<sequence>MAEEQVLNTHNASILLSAANKSHYPQDDLPEIALAGRSNVGKSSFINTILGRKNLARTSSKPGKTQLLNFFNIDDKLRFVDVPGYGYAKVSKSERAKWGKMIEEYLTTRDNLRAVVSLVDLRHAPSKEDIQMYDFLKYYDIPVIVVATKADKIPRGKWNKHESVVKKALNFDKSDTFIVFSSVERIGIDDSWDAILEQV</sequence>
<accession>Q1JHC1</accession>
<name>ENGB_STRPD</name>
<comment type="function">
    <text evidence="1">Necessary for normal cell division and for the maintenance of normal septation.</text>
</comment>
<comment type="cofactor">
    <cofactor evidence="1">
        <name>Mg(2+)</name>
        <dbReference type="ChEBI" id="CHEBI:18420"/>
    </cofactor>
</comment>
<comment type="similarity">
    <text evidence="1">Belongs to the TRAFAC class TrmE-Era-EngA-EngB-Septin-like GTPase superfamily. EngB GTPase family.</text>
</comment>
<keyword id="KW-0131">Cell cycle</keyword>
<keyword id="KW-0132">Cell division</keyword>
<keyword id="KW-0342">GTP-binding</keyword>
<keyword id="KW-0460">Magnesium</keyword>
<keyword id="KW-0479">Metal-binding</keyword>
<keyword id="KW-0547">Nucleotide-binding</keyword>
<keyword id="KW-0717">Septation</keyword>